<accession>B5F011</accession>
<reference key="1">
    <citation type="journal article" date="2011" name="J. Bacteriol.">
        <title>Comparative genomics of 28 Salmonella enterica isolates: evidence for CRISPR-mediated adaptive sublineage evolution.</title>
        <authorList>
            <person name="Fricke W.F."/>
            <person name="Mammel M.K."/>
            <person name="McDermott P.F."/>
            <person name="Tartera C."/>
            <person name="White D.G."/>
            <person name="Leclerc J.E."/>
            <person name="Ravel J."/>
            <person name="Cebula T.A."/>
        </authorList>
    </citation>
    <scope>NUCLEOTIDE SEQUENCE [LARGE SCALE GENOMIC DNA]</scope>
    <source>
        <strain>SL483</strain>
    </source>
</reference>
<proteinExistence type="inferred from homology"/>
<evidence type="ECO:0000255" key="1">
    <source>
        <dbReference type="HAMAP-Rule" id="MF_00187"/>
    </source>
</evidence>
<protein>
    <recommendedName>
        <fullName evidence="1">Sulfur carrier protein FdhD</fullName>
    </recommendedName>
</protein>
<feature type="chain" id="PRO_1000098786" description="Sulfur carrier protein FdhD">
    <location>
        <begin position="1"/>
        <end position="278"/>
    </location>
</feature>
<feature type="active site" description="Cysteine persulfide intermediate" evidence="1">
    <location>
        <position position="121"/>
    </location>
</feature>
<feature type="binding site" evidence="1">
    <location>
        <begin position="260"/>
        <end position="265"/>
    </location>
    <ligand>
        <name>Mo-bis(molybdopterin guanine dinucleotide)</name>
        <dbReference type="ChEBI" id="CHEBI:60539"/>
    </ligand>
</feature>
<sequence>MNNILSEEVLNVTDFTTSRQLTLWKREDLQSPQLDDVAEEVPVALVYNGISHVVMMASPKDLTHFAMGFSLSEGIIDSPREIYGMDVVPSCNGLEVQIDLSSRRFMGLKARRRALAGRTGCGVCGVEQLNDIGKPVQPLPFSQTFNLGNLDRALKHLNDFQPTGKLTGCTHAAAWVMPSGELAGGHEDVGRHVALDKLLGRRATEGEEWRQGAALVSSRASYEMVQKSAMCGVEILFAVSAATTLAVDVAERCNLTLVGFCKPGRATIYTHPQRLIAD</sequence>
<comment type="function">
    <text evidence="1">Required for formate dehydrogenase (FDH) activity. Acts as a sulfur carrier protein that transfers sulfur from IscS to the molybdenum cofactor prior to its insertion into FDH.</text>
</comment>
<comment type="subcellular location">
    <subcellularLocation>
        <location evidence="1">Cytoplasm</location>
    </subcellularLocation>
</comment>
<comment type="similarity">
    <text evidence="1">Belongs to the FdhD family.</text>
</comment>
<dbReference type="EMBL" id="CP001138">
    <property type="protein sequence ID" value="ACH51151.1"/>
    <property type="molecule type" value="Genomic_DNA"/>
</dbReference>
<dbReference type="RefSeq" id="WP_001059743.1">
    <property type="nucleotide sequence ID" value="NC_011149.1"/>
</dbReference>
<dbReference type="SMR" id="B5F011"/>
<dbReference type="KEGG" id="sea:SeAg_B4274"/>
<dbReference type="HOGENOM" id="CLU_056887_2_0_6"/>
<dbReference type="Proteomes" id="UP000008819">
    <property type="component" value="Chromosome"/>
</dbReference>
<dbReference type="GO" id="GO:0005737">
    <property type="term" value="C:cytoplasm"/>
    <property type="evidence" value="ECO:0007669"/>
    <property type="project" value="UniProtKB-SubCell"/>
</dbReference>
<dbReference type="GO" id="GO:0097163">
    <property type="term" value="F:sulfur carrier activity"/>
    <property type="evidence" value="ECO:0007669"/>
    <property type="project" value="UniProtKB-UniRule"/>
</dbReference>
<dbReference type="GO" id="GO:0016783">
    <property type="term" value="F:sulfurtransferase activity"/>
    <property type="evidence" value="ECO:0007669"/>
    <property type="project" value="InterPro"/>
</dbReference>
<dbReference type="GO" id="GO:0006777">
    <property type="term" value="P:Mo-molybdopterin cofactor biosynthetic process"/>
    <property type="evidence" value="ECO:0007669"/>
    <property type="project" value="UniProtKB-UniRule"/>
</dbReference>
<dbReference type="Gene3D" id="3.10.20.10">
    <property type="match status" value="1"/>
</dbReference>
<dbReference type="Gene3D" id="3.40.140.10">
    <property type="entry name" value="Cytidine Deaminase, domain 2"/>
    <property type="match status" value="1"/>
</dbReference>
<dbReference type="HAMAP" id="MF_00187">
    <property type="entry name" value="FdhD"/>
    <property type="match status" value="1"/>
</dbReference>
<dbReference type="InterPro" id="IPR016193">
    <property type="entry name" value="Cytidine_deaminase-like"/>
</dbReference>
<dbReference type="InterPro" id="IPR003786">
    <property type="entry name" value="FdhD"/>
</dbReference>
<dbReference type="NCBIfam" id="TIGR00129">
    <property type="entry name" value="fdhD_narQ"/>
    <property type="match status" value="1"/>
</dbReference>
<dbReference type="PANTHER" id="PTHR30592">
    <property type="entry name" value="FORMATE DEHYDROGENASE"/>
    <property type="match status" value="1"/>
</dbReference>
<dbReference type="PANTHER" id="PTHR30592:SF1">
    <property type="entry name" value="SULFUR CARRIER PROTEIN FDHD"/>
    <property type="match status" value="1"/>
</dbReference>
<dbReference type="Pfam" id="PF02634">
    <property type="entry name" value="FdhD-NarQ"/>
    <property type="match status" value="1"/>
</dbReference>
<dbReference type="PIRSF" id="PIRSF015626">
    <property type="entry name" value="FdhD"/>
    <property type="match status" value="1"/>
</dbReference>
<dbReference type="SUPFAM" id="SSF53927">
    <property type="entry name" value="Cytidine deaminase-like"/>
    <property type="match status" value="1"/>
</dbReference>
<name>FDHD_SALA4</name>
<organism>
    <name type="scientific">Salmonella agona (strain SL483)</name>
    <dbReference type="NCBI Taxonomy" id="454166"/>
    <lineage>
        <taxon>Bacteria</taxon>
        <taxon>Pseudomonadati</taxon>
        <taxon>Pseudomonadota</taxon>
        <taxon>Gammaproteobacteria</taxon>
        <taxon>Enterobacterales</taxon>
        <taxon>Enterobacteriaceae</taxon>
        <taxon>Salmonella</taxon>
    </lineage>
</organism>
<gene>
    <name evidence="1" type="primary">fdhD</name>
    <name type="ordered locus">SeAg_B4274</name>
</gene>
<keyword id="KW-0963">Cytoplasm</keyword>
<keyword id="KW-0501">Molybdenum cofactor biosynthesis</keyword>